<reference key="1">
    <citation type="journal article" date="2010" name="J. Bacteriol.">
        <title>Genome sequence of the Fleming strain of Micrococcus luteus, a simple free-living actinobacterium.</title>
        <authorList>
            <person name="Young M."/>
            <person name="Artsatbanov V."/>
            <person name="Beller H.R."/>
            <person name="Chandra G."/>
            <person name="Chater K.F."/>
            <person name="Dover L.G."/>
            <person name="Goh E.B."/>
            <person name="Kahan T."/>
            <person name="Kaprelyants A.S."/>
            <person name="Kyrpides N."/>
            <person name="Lapidus A."/>
            <person name="Lowry S.R."/>
            <person name="Lykidis A."/>
            <person name="Mahillon J."/>
            <person name="Markowitz V."/>
            <person name="Mavromatis K."/>
            <person name="Mukamolova G.V."/>
            <person name="Oren A."/>
            <person name="Rokem J.S."/>
            <person name="Smith M.C."/>
            <person name="Young D.I."/>
            <person name="Greenblatt C.L."/>
        </authorList>
    </citation>
    <scope>NUCLEOTIDE SEQUENCE [LARGE SCALE GENOMIC DNA]</scope>
    <source>
        <strain>ATCC 4698 / DSM 20030 / JCM 1464 / CCM 169 / CCUG 5858 / IAM 1056 / NBRC 3333 / NCIMB 9278 / NCTC 2665 / VKM Ac-2230</strain>
    </source>
</reference>
<accession>C5CC74</accession>
<name>RL1_MICLC</name>
<sequence>MAQRSKAYKAAKAAIGEDLYSPVEAIRLAKETNPSKTDATVEVALRLSVDPRKADQMVRGSVSLPHGTGKTARVVVFATGDRAEAARAAGADVVGDDDLIARISEGWVDFDAAVASPELMGKVGRLGKVLGPRNLMPNPKTGTVTPDVAKAVTDIKGGKIDFRVDKHSNLHFIIGKTSFEAKALVENYAAALEEILRLKPSSSKGRYISKATVATTFGPGVPMDPNVTSVDSSEL</sequence>
<evidence type="ECO:0000255" key="1">
    <source>
        <dbReference type="HAMAP-Rule" id="MF_01318"/>
    </source>
</evidence>
<evidence type="ECO:0000305" key="2"/>
<keyword id="KW-1185">Reference proteome</keyword>
<keyword id="KW-0678">Repressor</keyword>
<keyword id="KW-0687">Ribonucleoprotein</keyword>
<keyword id="KW-0689">Ribosomal protein</keyword>
<keyword id="KW-0694">RNA-binding</keyword>
<keyword id="KW-0699">rRNA-binding</keyword>
<keyword id="KW-0810">Translation regulation</keyword>
<keyword id="KW-0820">tRNA-binding</keyword>
<feature type="chain" id="PRO_1000214426" description="Large ribosomal subunit protein uL1">
    <location>
        <begin position="1"/>
        <end position="235"/>
    </location>
</feature>
<gene>
    <name evidence="1" type="primary">rplA</name>
    <name type="ordered locus">Mlut_17280</name>
</gene>
<organism>
    <name type="scientific">Micrococcus luteus (strain ATCC 4698 / DSM 20030 / JCM 1464 / CCM 169 / CCUG 5858 / IAM 1056 / NBRC 3333 / NCIMB 9278 / NCTC 2665 / VKM Ac-2230)</name>
    <name type="common">Micrococcus lysodeikticus</name>
    <dbReference type="NCBI Taxonomy" id="465515"/>
    <lineage>
        <taxon>Bacteria</taxon>
        <taxon>Bacillati</taxon>
        <taxon>Actinomycetota</taxon>
        <taxon>Actinomycetes</taxon>
        <taxon>Micrococcales</taxon>
        <taxon>Micrococcaceae</taxon>
        <taxon>Micrococcus</taxon>
    </lineage>
</organism>
<comment type="function">
    <text evidence="1">Binds directly to 23S rRNA. The L1 stalk is quite mobile in the ribosome, and is involved in E site tRNA release.</text>
</comment>
<comment type="function">
    <text evidence="1">Protein L1 is also a translational repressor protein, it controls the translation of the L11 operon by binding to its mRNA.</text>
</comment>
<comment type="subunit">
    <text evidence="1">Part of the 50S ribosomal subunit.</text>
</comment>
<comment type="similarity">
    <text evidence="1">Belongs to the universal ribosomal protein uL1 family.</text>
</comment>
<proteinExistence type="inferred from homology"/>
<dbReference type="EMBL" id="CP001628">
    <property type="protein sequence ID" value="ACS31215.1"/>
    <property type="molecule type" value="Genomic_DNA"/>
</dbReference>
<dbReference type="RefSeq" id="WP_010080375.1">
    <property type="nucleotide sequence ID" value="NC_012803.1"/>
</dbReference>
<dbReference type="SMR" id="C5CC74"/>
<dbReference type="STRING" id="465515.Mlut_17280"/>
<dbReference type="EnsemblBacteria" id="ACS31215">
    <property type="protein sequence ID" value="ACS31215"/>
    <property type="gene ID" value="Mlut_17280"/>
</dbReference>
<dbReference type="GeneID" id="93343594"/>
<dbReference type="KEGG" id="mlu:Mlut_17280"/>
<dbReference type="PATRIC" id="fig|465515.4.peg.1668"/>
<dbReference type="eggNOG" id="COG0081">
    <property type="taxonomic scope" value="Bacteria"/>
</dbReference>
<dbReference type="HOGENOM" id="CLU_062853_0_0_11"/>
<dbReference type="Proteomes" id="UP000000738">
    <property type="component" value="Chromosome"/>
</dbReference>
<dbReference type="GO" id="GO:0015934">
    <property type="term" value="C:large ribosomal subunit"/>
    <property type="evidence" value="ECO:0007669"/>
    <property type="project" value="InterPro"/>
</dbReference>
<dbReference type="GO" id="GO:0019843">
    <property type="term" value="F:rRNA binding"/>
    <property type="evidence" value="ECO:0007669"/>
    <property type="project" value="UniProtKB-UniRule"/>
</dbReference>
<dbReference type="GO" id="GO:0003735">
    <property type="term" value="F:structural constituent of ribosome"/>
    <property type="evidence" value="ECO:0007669"/>
    <property type="project" value="InterPro"/>
</dbReference>
<dbReference type="GO" id="GO:0000049">
    <property type="term" value="F:tRNA binding"/>
    <property type="evidence" value="ECO:0007669"/>
    <property type="project" value="UniProtKB-KW"/>
</dbReference>
<dbReference type="GO" id="GO:0006417">
    <property type="term" value="P:regulation of translation"/>
    <property type="evidence" value="ECO:0007669"/>
    <property type="project" value="UniProtKB-KW"/>
</dbReference>
<dbReference type="GO" id="GO:0006412">
    <property type="term" value="P:translation"/>
    <property type="evidence" value="ECO:0007669"/>
    <property type="project" value="UniProtKB-UniRule"/>
</dbReference>
<dbReference type="CDD" id="cd00403">
    <property type="entry name" value="Ribosomal_L1"/>
    <property type="match status" value="1"/>
</dbReference>
<dbReference type="FunFam" id="3.40.50.790:FF:000001">
    <property type="entry name" value="50S ribosomal protein L1"/>
    <property type="match status" value="1"/>
</dbReference>
<dbReference type="Gene3D" id="3.30.190.20">
    <property type="match status" value="1"/>
</dbReference>
<dbReference type="Gene3D" id="3.40.50.790">
    <property type="match status" value="1"/>
</dbReference>
<dbReference type="HAMAP" id="MF_01318_B">
    <property type="entry name" value="Ribosomal_uL1_B"/>
    <property type="match status" value="1"/>
</dbReference>
<dbReference type="InterPro" id="IPR005878">
    <property type="entry name" value="Ribosom_uL1_bac-type"/>
</dbReference>
<dbReference type="InterPro" id="IPR002143">
    <property type="entry name" value="Ribosomal_uL1"/>
</dbReference>
<dbReference type="InterPro" id="IPR023674">
    <property type="entry name" value="Ribosomal_uL1-like"/>
</dbReference>
<dbReference type="InterPro" id="IPR028364">
    <property type="entry name" value="Ribosomal_uL1/biogenesis"/>
</dbReference>
<dbReference type="InterPro" id="IPR016095">
    <property type="entry name" value="Ribosomal_uL1_3-a/b-sand"/>
</dbReference>
<dbReference type="InterPro" id="IPR023673">
    <property type="entry name" value="Ribosomal_uL1_CS"/>
</dbReference>
<dbReference type="NCBIfam" id="TIGR01169">
    <property type="entry name" value="rplA_bact"/>
    <property type="match status" value="1"/>
</dbReference>
<dbReference type="PANTHER" id="PTHR36427">
    <property type="entry name" value="54S RIBOSOMAL PROTEIN L1, MITOCHONDRIAL"/>
    <property type="match status" value="1"/>
</dbReference>
<dbReference type="PANTHER" id="PTHR36427:SF3">
    <property type="entry name" value="LARGE RIBOSOMAL SUBUNIT PROTEIN UL1M"/>
    <property type="match status" value="1"/>
</dbReference>
<dbReference type="Pfam" id="PF00687">
    <property type="entry name" value="Ribosomal_L1"/>
    <property type="match status" value="1"/>
</dbReference>
<dbReference type="PIRSF" id="PIRSF002155">
    <property type="entry name" value="Ribosomal_L1"/>
    <property type="match status" value="1"/>
</dbReference>
<dbReference type="SUPFAM" id="SSF56808">
    <property type="entry name" value="Ribosomal protein L1"/>
    <property type="match status" value="1"/>
</dbReference>
<dbReference type="PROSITE" id="PS01199">
    <property type="entry name" value="RIBOSOMAL_L1"/>
    <property type="match status" value="1"/>
</dbReference>
<protein>
    <recommendedName>
        <fullName evidence="1">Large ribosomal subunit protein uL1</fullName>
    </recommendedName>
    <alternativeName>
        <fullName evidence="2">50S ribosomal protein L1</fullName>
    </alternativeName>
</protein>